<proteinExistence type="inferred from homology"/>
<accession>Q92L19</accession>
<reference key="1">
    <citation type="journal article" date="2001" name="Proc. Natl. Acad. Sci. U.S.A.">
        <title>Analysis of the chromosome sequence of the legume symbiont Sinorhizobium meliloti strain 1021.</title>
        <authorList>
            <person name="Capela D."/>
            <person name="Barloy-Hubler F."/>
            <person name="Gouzy J."/>
            <person name="Bothe G."/>
            <person name="Ampe F."/>
            <person name="Batut J."/>
            <person name="Boistard P."/>
            <person name="Becker A."/>
            <person name="Boutry M."/>
            <person name="Cadieu E."/>
            <person name="Dreano S."/>
            <person name="Gloux S."/>
            <person name="Godrie T."/>
            <person name="Goffeau A."/>
            <person name="Kahn D."/>
            <person name="Kiss E."/>
            <person name="Lelaure V."/>
            <person name="Masuy D."/>
            <person name="Pohl T."/>
            <person name="Portetelle D."/>
            <person name="Puehler A."/>
            <person name="Purnelle B."/>
            <person name="Ramsperger U."/>
            <person name="Renard C."/>
            <person name="Thebault P."/>
            <person name="Vandenbol M."/>
            <person name="Weidner S."/>
            <person name="Galibert F."/>
        </authorList>
    </citation>
    <scope>NUCLEOTIDE SEQUENCE [LARGE SCALE GENOMIC DNA]</scope>
    <source>
        <strain>1021</strain>
    </source>
</reference>
<reference key="2">
    <citation type="journal article" date="2001" name="Science">
        <title>The composite genome of the legume symbiont Sinorhizobium meliloti.</title>
        <authorList>
            <person name="Galibert F."/>
            <person name="Finan T.M."/>
            <person name="Long S.R."/>
            <person name="Puehler A."/>
            <person name="Abola P."/>
            <person name="Ampe F."/>
            <person name="Barloy-Hubler F."/>
            <person name="Barnett M.J."/>
            <person name="Becker A."/>
            <person name="Boistard P."/>
            <person name="Bothe G."/>
            <person name="Boutry M."/>
            <person name="Bowser L."/>
            <person name="Buhrmester J."/>
            <person name="Cadieu E."/>
            <person name="Capela D."/>
            <person name="Chain P."/>
            <person name="Cowie A."/>
            <person name="Davis R.W."/>
            <person name="Dreano S."/>
            <person name="Federspiel N.A."/>
            <person name="Fisher R.F."/>
            <person name="Gloux S."/>
            <person name="Godrie T."/>
            <person name="Goffeau A."/>
            <person name="Golding B."/>
            <person name="Gouzy J."/>
            <person name="Gurjal M."/>
            <person name="Hernandez-Lucas I."/>
            <person name="Hong A."/>
            <person name="Huizar L."/>
            <person name="Hyman R.W."/>
            <person name="Jones T."/>
            <person name="Kahn D."/>
            <person name="Kahn M.L."/>
            <person name="Kalman S."/>
            <person name="Keating D.H."/>
            <person name="Kiss E."/>
            <person name="Komp C."/>
            <person name="Lelaure V."/>
            <person name="Masuy D."/>
            <person name="Palm C."/>
            <person name="Peck M.C."/>
            <person name="Pohl T.M."/>
            <person name="Portetelle D."/>
            <person name="Purnelle B."/>
            <person name="Ramsperger U."/>
            <person name="Surzycki R."/>
            <person name="Thebault P."/>
            <person name="Vandenbol M."/>
            <person name="Vorhoelter F.J."/>
            <person name="Weidner S."/>
            <person name="Wells D.H."/>
            <person name="Wong K."/>
            <person name="Yeh K.-C."/>
            <person name="Batut J."/>
        </authorList>
    </citation>
    <scope>NUCLEOTIDE SEQUENCE [LARGE SCALE GENOMIC DNA]</scope>
    <source>
        <strain>1021</strain>
    </source>
</reference>
<comment type="function">
    <text evidence="1">Converts 2C-methyl-D-erythritol 2,4-cyclodiphosphate (ME-2,4cPP) into 1-hydroxy-2-methyl-2-(E)-butenyl 4-diphosphate.</text>
</comment>
<comment type="catalytic activity">
    <reaction evidence="1">
        <text>(2E)-4-hydroxy-3-methylbut-2-enyl diphosphate + oxidized [flavodoxin] + H2O + 2 H(+) = 2-C-methyl-D-erythritol 2,4-cyclic diphosphate + reduced [flavodoxin]</text>
        <dbReference type="Rhea" id="RHEA:43604"/>
        <dbReference type="Rhea" id="RHEA-COMP:10622"/>
        <dbReference type="Rhea" id="RHEA-COMP:10623"/>
        <dbReference type="ChEBI" id="CHEBI:15377"/>
        <dbReference type="ChEBI" id="CHEBI:15378"/>
        <dbReference type="ChEBI" id="CHEBI:57618"/>
        <dbReference type="ChEBI" id="CHEBI:58210"/>
        <dbReference type="ChEBI" id="CHEBI:58483"/>
        <dbReference type="ChEBI" id="CHEBI:128753"/>
        <dbReference type="EC" id="1.17.7.3"/>
    </reaction>
</comment>
<comment type="cofactor">
    <cofactor evidence="1">
        <name>[4Fe-4S] cluster</name>
        <dbReference type="ChEBI" id="CHEBI:49883"/>
    </cofactor>
    <text evidence="1">Binds 1 [4Fe-4S] cluster.</text>
</comment>
<comment type="pathway">
    <text evidence="1">Isoprenoid biosynthesis; isopentenyl diphosphate biosynthesis via DXP pathway; isopentenyl diphosphate from 1-deoxy-D-xylulose 5-phosphate: step 5/6.</text>
</comment>
<comment type="similarity">
    <text evidence="1">Belongs to the IspG family.</text>
</comment>
<keyword id="KW-0004">4Fe-4S</keyword>
<keyword id="KW-0408">Iron</keyword>
<keyword id="KW-0411">Iron-sulfur</keyword>
<keyword id="KW-0414">Isoprene biosynthesis</keyword>
<keyword id="KW-0479">Metal-binding</keyword>
<keyword id="KW-0560">Oxidoreductase</keyword>
<keyword id="KW-1185">Reference proteome</keyword>
<evidence type="ECO:0000255" key="1">
    <source>
        <dbReference type="HAMAP-Rule" id="MF_00159"/>
    </source>
</evidence>
<organism>
    <name type="scientific">Rhizobium meliloti (strain 1021)</name>
    <name type="common">Ensifer meliloti</name>
    <name type="synonym">Sinorhizobium meliloti</name>
    <dbReference type="NCBI Taxonomy" id="266834"/>
    <lineage>
        <taxon>Bacteria</taxon>
        <taxon>Pseudomonadati</taxon>
        <taxon>Pseudomonadota</taxon>
        <taxon>Alphaproteobacteria</taxon>
        <taxon>Hyphomicrobiales</taxon>
        <taxon>Rhizobiaceae</taxon>
        <taxon>Sinorhizobium/Ensifer group</taxon>
        <taxon>Sinorhizobium</taxon>
    </lineage>
</organism>
<gene>
    <name evidence="1" type="primary">ispG</name>
    <name type="synonym">gcpE</name>
    <name type="ordered locus">R03271</name>
    <name type="ORF">SMc03888</name>
</gene>
<protein>
    <recommendedName>
        <fullName evidence="1">4-hydroxy-3-methylbut-2-en-1-yl diphosphate synthase (flavodoxin)</fullName>
        <ecNumber evidence="1">1.17.7.3</ecNumber>
    </recommendedName>
    <alternativeName>
        <fullName evidence="1">1-hydroxy-2-methyl-2-(E)-butenyl 4-diphosphate synthase</fullName>
    </alternativeName>
</protein>
<sequence>MSSAFDFEPQPRRASVAVDVGGVIVGGGAPVVVQSMTNTDTADIDATVAQVAALHKAGSELVRITVDRDESAAAVPKIRERLLRLGIDVPLVGDFHYIGHKLLADHPACAEALAKYRINPGNVGFKDKKDKQFAEIIEMAIRYDKPVRIGVNWGSLDQELLTRLMDANQANGSPLTAQQVMRETIVQSALLSAELAEELGLPRSRIILSAKVSGVQDLIAVYAMLAARSVHALHLGLTEAGMGTKGIVASSASLGILMQQGIGDTIRISLTPEPGGDRTREVQVAQELLQVMGFRQFIPVVAACPGCGRTTSTVFQELAQKIQEDIRASMPVWREKYPGVEALKVAVMGCIVNGPGESKHADIGISLPGTGEMPAAPVFIDGQKALTLRGPKIAEDFQLLVADYIEKRFGHGQAAAE</sequence>
<feature type="chain" id="PRO_0000190623" description="4-hydroxy-3-methylbut-2-en-1-yl diphosphate synthase (flavodoxin)">
    <location>
        <begin position="1"/>
        <end position="417"/>
    </location>
</feature>
<feature type="binding site" evidence="1">
    <location>
        <position position="304"/>
    </location>
    <ligand>
        <name>[4Fe-4S] cluster</name>
        <dbReference type="ChEBI" id="CHEBI:49883"/>
    </ligand>
</feature>
<feature type="binding site" evidence="1">
    <location>
        <position position="307"/>
    </location>
    <ligand>
        <name>[4Fe-4S] cluster</name>
        <dbReference type="ChEBI" id="CHEBI:49883"/>
    </ligand>
</feature>
<feature type="binding site" evidence="1">
    <location>
        <position position="350"/>
    </location>
    <ligand>
        <name>[4Fe-4S] cluster</name>
        <dbReference type="ChEBI" id="CHEBI:49883"/>
    </ligand>
</feature>
<feature type="binding site" evidence="1">
    <location>
        <position position="357"/>
    </location>
    <ligand>
        <name>[4Fe-4S] cluster</name>
        <dbReference type="ChEBI" id="CHEBI:49883"/>
    </ligand>
</feature>
<dbReference type="EC" id="1.17.7.3" evidence="1"/>
<dbReference type="EMBL" id="AL591688">
    <property type="protein sequence ID" value="CAC47850.1"/>
    <property type="molecule type" value="Genomic_DNA"/>
</dbReference>
<dbReference type="RefSeq" id="NP_387377.1">
    <property type="nucleotide sequence ID" value="NC_003047.1"/>
</dbReference>
<dbReference type="RefSeq" id="WP_010970534.1">
    <property type="nucleotide sequence ID" value="NC_003047.1"/>
</dbReference>
<dbReference type="SMR" id="Q92L19"/>
<dbReference type="EnsemblBacteria" id="CAC47850">
    <property type="protein sequence ID" value="CAC47850"/>
    <property type="gene ID" value="SMc03888"/>
</dbReference>
<dbReference type="KEGG" id="sme:SMc03888"/>
<dbReference type="PATRIC" id="fig|266834.11.peg.4829"/>
<dbReference type="eggNOG" id="COG0821">
    <property type="taxonomic scope" value="Bacteria"/>
</dbReference>
<dbReference type="HOGENOM" id="CLU_042258_1_0_5"/>
<dbReference type="OrthoDB" id="9803214at2"/>
<dbReference type="UniPathway" id="UPA00056">
    <property type="reaction ID" value="UER00096"/>
</dbReference>
<dbReference type="Proteomes" id="UP000001976">
    <property type="component" value="Chromosome"/>
</dbReference>
<dbReference type="GO" id="GO:0051539">
    <property type="term" value="F:4 iron, 4 sulfur cluster binding"/>
    <property type="evidence" value="ECO:0007669"/>
    <property type="project" value="UniProtKB-UniRule"/>
</dbReference>
<dbReference type="GO" id="GO:0046429">
    <property type="term" value="F:4-hydroxy-3-methylbut-2-en-1-yl diphosphate synthase activity (ferredoxin)"/>
    <property type="evidence" value="ECO:0007669"/>
    <property type="project" value="UniProtKB-UniRule"/>
</dbReference>
<dbReference type="GO" id="GO:0141197">
    <property type="term" value="F:4-hydroxy-3-methylbut-2-enyl-diphosphate synthase activity (flavodoxin)"/>
    <property type="evidence" value="ECO:0007669"/>
    <property type="project" value="UniProtKB-EC"/>
</dbReference>
<dbReference type="GO" id="GO:0005506">
    <property type="term" value="F:iron ion binding"/>
    <property type="evidence" value="ECO:0007669"/>
    <property type="project" value="InterPro"/>
</dbReference>
<dbReference type="GO" id="GO:0019288">
    <property type="term" value="P:isopentenyl diphosphate biosynthetic process, methylerythritol 4-phosphate pathway"/>
    <property type="evidence" value="ECO:0007669"/>
    <property type="project" value="UniProtKB-UniRule"/>
</dbReference>
<dbReference type="GO" id="GO:0016114">
    <property type="term" value="P:terpenoid biosynthetic process"/>
    <property type="evidence" value="ECO:0007669"/>
    <property type="project" value="InterPro"/>
</dbReference>
<dbReference type="FunFam" id="3.30.413.10:FF:000012">
    <property type="entry name" value="4-hydroxy-3-methylbut-2-en-1-yl diphosphate synthase (flavodoxin)"/>
    <property type="match status" value="1"/>
</dbReference>
<dbReference type="Gene3D" id="3.20.20.20">
    <property type="entry name" value="Dihydropteroate synthase-like"/>
    <property type="match status" value="1"/>
</dbReference>
<dbReference type="Gene3D" id="3.30.413.10">
    <property type="entry name" value="Sulfite Reductase Hemoprotein, domain 1"/>
    <property type="match status" value="1"/>
</dbReference>
<dbReference type="HAMAP" id="MF_00159">
    <property type="entry name" value="IspG"/>
    <property type="match status" value="1"/>
</dbReference>
<dbReference type="InterPro" id="IPR011005">
    <property type="entry name" value="Dihydropteroate_synth-like_sf"/>
</dbReference>
<dbReference type="InterPro" id="IPR016425">
    <property type="entry name" value="IspG_bac"/>
</dbReference>
<dbReference type="InterPro" id="IPR004588">
    <property type="entry name" value="IspG_bac-typ"/>
</dbReference>
<dbReference type="InterPro" id="IPR045854">
    <property type="entry name" value="NO2/SO3_Rdtase_4Fe4S_sf"/>
</dbReference>
<dbReference type="NCBIfam" id="TIGR00612">
    <property type="entry name" value="ispG_gcpE"/>
    <property type="match status" value="1"/>
</dbReference>
<dbReference type="NCBIfam" id="NF001540">
    <property type="entry name" value="PRK00366.1"/>
    <property type="match status" value="1"/>
</dbReference>
<dbReference type="PANTHER" id="PTHR30454">
    <property type="entry name" value="4-HYDROXY-3-METHYLBUT-2-EN-1-YL DIPHOSPHATE SYNTHASE"/>
    <property type="match status" value="1"/>
</dbReference>
<dbReference type="PANTHER" id="PTHR30454:SF0">
    <property type="entry name" value="4-HYDROXY-3-METHYLBUT-2-EN-1-YL DIPHOSPHATE SYNTHASE (FERREDOXIN), CHLOROPLASTIC"/>
    <property type="match status" value="1"/>
</dbReference>
<dbReference type="Pfam" id="PF04551">
    <property type="entry name" value="GcpE"/>
    <property type="match status" value="1"/>
</dbReference>
<dbReference type="PIRSF" id="PIRSF004640">
    <property type="entry name" value="IspG"/>
    <property type="match status" value="1"/>
</dbReference>
<dbReference type="SUPFAM" id="SSF56014">
    <property type="entry name" value="Nitrite and sulphite reductase 4Fe-4S domain-like"/>
    <property type="match status" value="1"/>
</dbReference>
<name>ISPG_RHIME</name>